<gene>
    <name evidence="1" type="primary">cysH</name>
    <name type="ordered locus">BUAP5A_419</name>
</gene>
<feature type="chain" id="PRO_1000117925" description="Phosphoadenosine 5'-phosphosulfate reductase">
    <location>
        <begin position="1"/>
        <end position="244"/>
    </location>
</feature>
<feature type="active site" description="Nucleophile; cysteine thiosulfonate intermediate" evidence="1">
    <location>
        <position position="239"/>
    </location>
</feature>
<reference key="1">
    <citation type="journal article" date="2009" name="Science">
        <title>The dynamics and time scale of ongoing genomic erosion in symbiotic bacteria.</title>
        <authorList>
            <person name="Moran N.A."/>
            <person name="McLaughlin H.J."/>
            <person name="Sorek R."/>
        </authorList>
    </citation>
    <scope>NUCLEOTIDE SEQUENCE [LARGE SCALE GENOMIC DNA]</scope>
    <source>
        <strain>5A</strain>
    </source>
</reference>
<dbReference type="EC" id="1.8.4.8" evidence="1"/>
<dbReference type="EMBL" id="CP001161">
    <property type="protein sequence ID" value="ACL30775.1"/>
    <property type="molecule type" value="Genomic_DNA"/>
</dbReference>
<dbReference type="RefSeq" id="WP_009874379.1">
    <property type="nucleotide sequence ID" value="NC_011833.1"/>
</dbReference>
<dbReference type="SMR" id="B8D9K4"/>
<dbReference type="KEGG" id="bap:BUAP5A_419"/>
<dbReference type="HOGENOM" id="CLU_044089_3_0_6"/>
<dbReference type="OrthoDB" id="9794018at2"/>
<dbReference type="UniPathway" id="UPA00140">
    <property type="reaction ID" value="UER00206"/>
</dbReference>
<dbReference type="Proteomes" id="UP000006904">
    <property type="component" value="Chromosome"/>
</dbReference>
<dbReference type="GO" id="GO:0005737">
    <property type="term" value="C:cytoplasm"/>
    <property type="evidence" value="ECO:0007669"/>
    <property type="project" value="UniProtKB-SubCell"/>
</dbReference>
<dbReference type="GO" id="GO:0004604">
    <property type="term" value="F:phosphoadenylyl-sulfate reductase (thioredoxin) activity"/>
    <property type="evidence" value="ECO:0007669"/>
    <property type="project" value="UniProtKB-UniRule"/>
</dbReference>
<dbReference type="GO" id="GO:0070814">
    <property type="term" value="P:hydrogen sulfide biosynthetic process"/>
    <property type="evidence" value="ECO:0007669"/>
    <property type="project" value="UniProtKB-UniRule"/>
</dbReference>
<dbReference type="GO" id="GO:0019379">
    <property type="term" value="P:sulfate assimilation, phosphoadenylyl sulfate reduction by phosphoadenylyl-sulfate reductase (thioredoxin)"/>
    <property type="evidence" value="ECO:0007669"/>
    <property type="project" value="UniProtKB-UniRule"/>
</dbReference>
<dbReference type="CDD" id="cd23945">
    <property type="entry name" value="PAPS_reductase"/>
    <property type="match status" value="1"/>
</dbReference>
<dbReference type="Gene3D" id="3.40.50.620">
    <property type="entry name" value="HUPs"/>
    <property type="match status" value="1"/>
</dbReference>
<dbReference type="HAMAP" id="MF_00063">
    <property type="entry name" value="CysH"/>
    <property type="match status" value="1"/>
</dbReference>
<dbReference type="InterPro" id="IPR004511">
    <property type="entry name" value="PAPS/APS_Rdtase"/>
</dbReference>
<dbReference type="InterPro" id="IPR002500">
    <property type="entry name" value="PAPS_reduct_dom"/>
</dbReference>
<dbReference type="InterPro" id="IPR011800">
    <property type="entry name" value="PAPS_reductase_CysH"/>
</dbReference>
<dbReference type="InterPro" id="IPR014729">
    <property type="entry name" value="Rossmann-like_a/b/a_fold"/>
</dbReference>
<dbReference type="NCBIfam" id="TIGR00434">
    <property type="entry name" value="cysH"/>
    <property type="match status" value="1"/>
</dbReference>
<dbReference type="NCBIfam" id="TIGR02057">
    <property type="entry name" value="PAPS_reductase"/>
    <property type="match status" value="1"/>
</dbReference>
<dbReference type="NCBIfam" id="NF002537">
    <property type="entry name" value="PRK02090.1"/>
    <property type="match status" value="1"/>
</dbReference>
<dbReference type="PANTHER" id="PTHR46509">
    <property type="entry name" value="PHOSPHOADENOSINE PHOSPHOSULFATE REDUCTASE"/>
    <property type="match status" value="1"/>
</dbReference>
<dbReference type="PANTHER" id="PTHR46509:SF1">
    <property type="entry name" value="PHOSPHOADENOSINE PHOSPHOSULFATE REDUCTASE"/>
    <property type="match status" value="1"/>
</dbReference>
<dbReference type="Pfam" id="PF01507">
    <property type="entry name" value="PAPS_reduct"/>
    <property type="match status" value="1"/>
</dbReference>
<dbReference type="PIRSF" id="PIRSF000857">
    <property type="entry name" value="PAPS_reductase"/>
    <property type="match status" value="1"/>
</dbReference>
<dbReference type="SUPFAM" id="SSF52402">
    <property type="entry name" value="Adenine nucleotide alpha hydrolases-like"/>
    <property type="match status" value="1"/>
</dbReference>
<keyword id="KW-0963">Cytoplasm</keyword>
<keyword id="KW-0560">Oxidoreductase</keyword>
<evidence type="ECO:0000255" key="1">
    <source>
        <dbReference type="HAMAP-Rule" id="MF_00063"/>
    </source>
</evidence>
<name>CYSH_BUCA5</name>
<organism>
    <name type="scientific">Buchnera aphidicola subsp. Acyrthosiphon pisum (strain 5A)</name>
    <dbReference type="NCBI Taxonomy" id="563178"/>
    <lineage>
        <taxon>Bacteria</taxon>
        <taxon>Pseudomonadati</taxon>
        <taxon>Pseudomonadota</taxon>
        <taxon>Gammaproteobacteria</taxon>
        <taxon>Enterobacterales</taxon>
        <taxon>Erwiniaceae</taxon>
        <taxon>Buchnera</taxon>
    </lineage>
</organism>
<comment type="function">
    <text evidence="1">Catalyzes the formation of sulfite from phosphoadenosine 5'-phosphosulfate (PAPS) using thioredoxin as an electron donor.</text>
</comment>
<comment type="catalytic activity">
    <reaction evidence="1">
        <text>[thioredoxin]-disulfide + sulfite + adenosine 3',5'-bisphosphate + 2 H(+) = [thioredoxin]-dithiol + 3'-phosphoadenylyl sulfate</text>
        <dbReference type="Rhea" id="RHEA:11724"/>
        <dbReference type="Rhea" id="RHEA-COMP:10698"/>
        <dbReference type="Rhea" id="RHEA-COMP:10700"/>
        <dbReference type="ChEBI" id="CHEBI:15378"/>
        <dbReference type="ChEBI" id="CHEBI:17359"/>
        <dbReference type="ChEBI" id="CHEBI:29950"/>
        <dbReference type="ChEBI" id="CHEBI:50058"/>
        <dbReference type="ChEBI" id="CHEBI:58339"/>
        <dbReference type="ChEBI" id="CHEBI:58343"/>
        <dbReference type="EC" id="1.8.4.8"/>
    </reaction>
</comment>
<comment type="pathway">
    <text evidence="1">Sulfur metabolism; hydrogen sulfide biosynthesis; sulfite from sulfate: step 3/3.</text>
</comment>
<comment type="subcellular location">
    <subcellularLocation>
        <location evidence="1">Cytoplasm</location>
    </subcellularLocation>
</comment>
<comment type="similarity">
    <text evidence="1">Belongs to the PAPS reductase family. CysH subfamily.</text>
</comment>
<sequence length="244" mass="28403">MSKFYIENINLLNSEKKNNILSELNLLLSNYSAEERISWALSHLPHTQIMSSSFGIQSTVLLHLIIKKKPDIPVILIDTGYLFPETYNFIDFLTNKFHLNLKVFRSTISSAWQEARYGKLWEKGIEGIDFYNNINKVQPMNFALNELSVQTWFAGLRHDQSKSRNLLPYLSIKKGIFKILPILDWSKDKIKDYLKENNLDTHPLYNDGYSSVGDTHTTKKHMPGMLEEETRFFGLKRECGLHEN</sequence>
<accession>B8D9K4</accession>
<protein>
    <recommendedName>
        <fullName evidence="1">Phosphoadenosine 5'-phosphosulfate reductase</fullName>
        <shortName evidence="1">PAPS reductase</shortName>
        <ecNumber evidence="1">1.8.4.8</ecNumber>
    </recommendedName>
    <alternativeName>
        <fullName evidence="1">3'-phosphoadenylylsulfate reductase</fullName>
    </alternativeName>
    <alternativeName>
        <fullName evidence="1">PAPS reductase, thioredoxin dependent</fullName>
    </alternativeName>
    <alternativeName>
        <fullName evidence="1">PAPS sulfotransferase</fullName>
    </alternativeName>
    <alternativeName>
        <fullName evidence="1">PAdoPS reductase</fullName>
    </alternativeName>
</protein>
<proteinExistence type="inferred from homology"/>